<keyword id="KW-1003">Cell membrane</keyword>
<keyword id="KW-0297">G-protein coupled receptor</keyword>
<keyword id="KW-0325">Glycoprotein</keyword>
<keyword id="KW-0449">Lipoprotein</keyword>
<keyword id="KW-0472">Membrane</keyword>
<keyword id="KW-0564">Palmitate</keyword>
<keyword id="KW-0675">Receptor</keyword>
<keyword id="KW-0807">Transducer</keyword>
<keyword id="KW-0812">Transmembrane</keyword>
<keyword id="KW-1133">Transmembrane helix</keyword>
<reference key="1">
    <citation type="journal article" date="2003" name="Curr. Biol.">
        <title>Molecular genetics and evolution of melanism in the cat family.</title>
        <authorList>
            <person name="Eizirik E."/>
            <person name="Yuhki N."/>
            <person name="Johnson W.E."/>
            <person name="Menotti-Raymond M."/>
            <person name="Hannah S.S."/>
            <person name="O'Brien S.J."/>
        </authorList>
    </citation>
    <scope>NUCLEOTIDE SEQUENCE [GENOMIC DNA]</scope>
    <scope>VARIANTS</scope>
    <source>
        <strain>Isolate Hya15</strain>
        <strain>Isolate Hya36</strain>
    </source>
</reference>
<proteinExistence type="inferred from homology"/>
<accession>Q865E5</accession>
<accession>Q865E6</accession>
<organism>
    <name type="scientific">Puma yagouaroundi</name>
    <name type="common">Jaguarundi</name>
    <name type="synonym">Herpailurus yagouaroundi</name>
    <dbReference type="NCBI Taxonomy" id="1608482"/>
    <lineage>
        <taxon>Eukaryota</taxon>
        <taxon>Metazoa</taxon>
        <taxon>Chordata</taxon>
        <taxon>Craniata</taxon>
        <taxon>Vertebrata</taxon>
        <taxon>Euteleostomi</taxon>
        <taxon>Mammalia</taxon>
        <taxon>Eutheria</taxon>
        <taxon>Laurasiatheria</taxon>
        <taxon>Carnivora</taxon>
        <taxon>Feliformia</taxon>
        <taxon>Felidae</taxon>
        <taxon>Felinae</taxon>
        <taxon>Puma</taxon>
    </lineage>
</organism>
<feature type="chain" id="PRO_0000069816" description="Melanocyte-stimulating hormone receptor">
    <location>
        <begin position="1"/>
        <end position="317"/>
    </location>
</feature>
<feature type="topological domain" description="Extracellular" evidence="2">
    <location>
        <begin position="1"/>
        <end position="37"/>
    </location>
</feature>
<feature type="transmembrane region" description="Helical; Name=1" evidence="2">
    <location>
        <begin position="38"/>
        <end position="63"/>
    </location>
</feature>
<feature type="topological domain" description="Cytoplasmic" evidence="2">
    <location>
        <begin position="64"/>
        <end position="72"/>
    </location>
</feature>
<feature type="transmembrane region" description="Helical; Name=2" evidence="2">
    <location>
        <begin position="73"/>
        <end position="93"/>
    </location>
</feature>
<feature type="topological domain" description="Extracellular" evidence="2">
    <location>
        <begin position="94"/>
        <end position="118"/>
    </location>
</feature>
<feature type="transmembrane region" description="Helical; Name=3" evidence="2">
    <location>
        <begin position="119"/>
        <end position="140"/>
    </location>
</feature>
<feature type="topological domain" description="Cytoplasmic" evidence="2">
    <location>
        <begin position="141"/>
        <end position="163"/>
    </location>
</feature>
<feature type="transmembrane region" description="Helical; Name=4" evidence="2">
    <location>
        <begin position="164"/>
        <end position="183"/>
    </location>
</feature>
<feature type="topological domain" description="Extracellular" evidence="2">
    <location>
        <begin position="184"/>
        <end position="191"/>
    </location>
</feature>
<feature type="transmembrane region" description="Helical; Name=5" evidence="2">
    <location>
        <begin position="192"/>
        <end position="211"/>
    </location>
</feature>
<feature type="topological domain" description="Cytoplasmic" evidence="2">
    <location>
        <begin position="212"/>
        <end position="240"/>
    </location>
</feature>
<feature type="transmembrane region" description="Helical; Name=6" evidence="2">
    <location>
        <begin position="241"/>
        <end position="266"/>
    </location>
</feature>
<feature type="topological domain" description="Extracellular" evidence="2">
    <location>
        <begin position="267"/>
        <end position="279"/>
    </location>
</feature>
<feature type="transmembrane region" description="Helical; Name=7" evidence="2">
    <location>
        <begin position="280"/>
        <end position="300"/>
    </location>
</feature>
<feature type="topological domain" description="Cytoplasmic" evidence="2">
    <location>
        <begin position="301"/>
        <end position="317"/>
    </location>
</feature>
<feature type="lipid moiety-binding region" description="S-palmitoyl cysteine" evidence="2">
    <location>
        <position position="315"/>
    </location>
</feature>
<feature type="glycosylation site" description="N-linked (GlcNAc...) asparagine" evidence="2">
    <location>
        <position position="15"/>
    </location>
</feature>
<feature type="glycosylation site" description="N-linked (GlcNAc...) asparagine" evidence="2">
    <location>
        <position position="29"/>
    </location>
</feature>
<feature type="sequence variant" description="In strain: Isolate Hya36.">
    <original>P</original>
    <variation>L</variation>
    <location>
        <position position="22"/>
    </location>
</feature>
<feature type="sequence variant" description="In strain: Isolate Hya36.">
    <original>I</original>
    <variation>V</variation>
    <location>
        <position position="63"/>
    </location>
</feature>
<feature type="sequence variant" description="In allele MC1R-delta-24.">
    <location>
        <begin position="95"/>
        <end position="102"/>
    </location>
</feature>
<feature type="sequence variant" description="In strain: Isolate Hya36.">
    <original>R</original>
    <variation>Q</variation>
    <location>
        <position position="310"/>
    </location>
</feature>
<evidence type="ECO:0000250" key="1">
    <source>
        <dbReference type="UniProtKB" id="Q01726"/>
    </source>
</evidence>
<evidence type="ECO:0000255" key="2"/>
<evidence type="ECO:0000255" key="3">
    <source>
        <dbReference type="PROSITE-ProRule" id="PRU00521"/>
    </source>
</evidence>
<evidence type="ECO:0000269" key="4">
    <source>
    </source>
</evidence>
<comment type="function">
    <text evidence="1">Receptor for MSH (alpha, beta and gamma) and ACTH (By similarity). The activity of this receptor is mediated by G proteins which activate adenylate cyclase (By similarity). Mediates melanogenesis, the production of eumelanin (black/brown) and phaeomelanin (red/yellow), via regulation of cAMP signaling in melanocytes (By similarity).</text>
</comment>
<comment type="subunit">
    <text evidence="1">Interacts with MGRN1, but does not undergo MGRN1-mediated ubiquitination; this interaction competes with GNAS-binding and thus inhibits agonist-induced cAMP production. Interacts with OPN3; the interaction results in a decrease in MC1R-mediated cAMP signaling and ultimately a decrease in melanin production in melanocytes.</text>
</comment>
<comment type="subcellular location">
    <subcellularLocation>
        <location evidence="1">Cell membrane</location>
        <topology evidence="2">Multi-pass membrane protein</topology>
    </subcellularLocation>
</comment>
<comment type="polymorphism">
    <text evidence="4">The allele MC1R-delta-24 is associated with melanistic coat coloration.</text>
</comment>
<comment type="similarity">
    <text evidence="3">Belongs to the G-protein coupled receptor 1 family.</text>
</comment>
<sequence length="317" mass="34750">MSVQGPQRRLLGSVNSTSPAAPRLGLAANQTGPRCLEVSVPDGLFLSLGLVSVVENVLVVAAIAKNRNLHSPMYYFICCLAVSDLLVSVSSVLETAVMLLLEAGTLAGRAAVVQQLDDIIDVLVCGAMVSSLCFLGAIAVDRYISIFYALRYHSIVTLPRAWRAISAIWVASVLSSTLFIAYYDHTAVLLCLVSFFVAMLVLMAVLYVHMLARACQHARGIARLHKRQRPVHQGLGLKGAATLTILLGIFFLCWGPFFLHLSLMVLCPRHPICGCVFKNFNLFLTLIICNSIVDPLIYAFRSQELRKTLREVLLCSW</sequence>
<name>MSHR_PUMYA</name>
<dbReference type="EMBL" id="AY237399">
    <property type="protein sequence ID" value="AAO62416.1"/>
    <property type="molecule type" value="Genomic_DNA"/>
</dbReference>
<dbReference type="EMBL" id="AY237398">
    <property type="protein sequence ID" value="AAO62415.1"/>
    <property type="molecule type" value="Genomic_DNA"/>
</dbReference>
<dbReference type="SMR" id="Q865E5"/>
<dbReference type="GlyCosmos" id="Q865E5">
    <property type="glycosylation" value="2 sites, No reported glycans"/>
</dbReference>
<dbReference type="GO" id="GO:0005886">
    <property type="term" value="C:plasma membrane"/>
    <property type="evidence" value="ECO:0000250"/>
    <property type="project" value="UniProtKB"/>
</dbReference>
<dbReference type="GO" id="GO:0004980">
    <property type="term" value="F:melanocyte-stimulating hormone receptor activity"/>
    <property type="evidence" value="ECO:0007669"/>
    <property type="project" value="InterPro"/>
</dbReference>
<dbReference type="FunFam" id="1.20.1070.10:FF:000211">
    <property type="entry name" value="Melanocyte-stimulating hormone receptor"/>
    <property type="match status" value="1"/>
</dbReference>
<dbReference type="Gene3D" id="1.20.1070.10">
    <property type="entry name" value="Rhodopsin 7-helix transmembrane proteins"/>
    <property type="match status" value="1"/>
</dbReference>
<dbReference type="InterPro" id="IPR000276">
    <property type="entry name" value="GPCR_Rhodpsn"/>
</dbReference>
<dbReference type="InterPro" id="IPR017452">
    <property type="entry name" value="GPCR_Rhodpsn_7TM"/>
</dbReference>
<dbReference type="InterPro" id="IPR001671">
    <property type="entry name" value="Melcrt_ACTH_rcpt"/>
</dbReference>
<dbReference type="InterPro" id="IPR000761">
    <property type="entry name" value="MSH_rcpt"/>
</dbReference>
<dbReference type="PANTHER" id="PTHR22750">
    <property type="entry name" value="G-PROTEIN COUPLED RECEPTOR"/>
    <property type="match status" value="1"/>
</dbReference>
<dbReference type="Pfam" id="PF00001">
    <property type="entry name" value="7tm_1"/>
    <property type="match status" value="2"/>
</dbReference>
<dbReference type="PRINTS" id="PR00237">
    <property type="entry name" value="GPCRRHODOPSN"/>
</dbReference>
<dbReference type="PRINTS" id="PR00534">
    <property type="entry name" value="MCRFAMILY"/>
</dbReference>
<dbReference type="PRINTS" id="PR00536">
    <property type="entry name" value="MELNOCYTESHR"/>
</dbReference>
<dbReference type="SMART" id="SM01381">
    <property type="entry name" value="7TM_GPCR_Srsx"/>
    <property type="match status" value="1"/>
</dbReference>
<dbReference type="SUPFAM" id="SSF81321">
    <property type="entry name" value="Family A G protein-coupled receptor-like"/>
    <property type="match status" value="1"/>
</dbReference>
<dbReference type="PROSITE" id="PS00237">
    <property type="entry name" value="G_PROTEIN_RECEP_F1_1"/>
    <property type="match status" value="1"/>
</dbReference>
<dbReference type="PROSITE" id="PS50262">
    <property type="entry name" value="G_PROTEIN_RECEP_F1_2"/>
    <property type="match status" value="1"/>
</dbReference>
<gene>
    <name type="primary">MC1R</name>
</gene>
<protein>
    <recommendedName>
        <fullName>Melanocyte-stimulating hormone receptor</fullName>
        <shortName>MSH-R</shortName>
    </recommendedName>
    <alternativeName>
        <fullName>Melanocortin receptor 1</fullName>
        <shortName>MC1-R</shortName>
    </alternativeName>
</protein>